<keyword id="KW-0963">Cytoplasm</keyword>
<reference key="1">
    <citation type="journal article" date="2006" name="Proc. Natl. Acad. Sci. U.S.A.">
        <title>Comparative genomics of the lactic acid bacteria.</title>
        <authorList>
            <person name="Makarova K.S."/>
            <person name="Slesarev A."/>
            <person name="Wolf Y.I."/>
            <person name="Sorokin A."/>
            <person name="Mirkin B."/>
            <person name="Koonin E.V."/>
            <person name="Pavlov A."/>
            <person name="Pavlova N."/>
            <person name="Karamychev V."/>
            <person name="Polouchine N."/>
            <person name="Shakhova V."/>
            <person name="Grigoriev I."/>
            <person name="Lou Y."/>
            <person name="Rohksar D."/>
            <person name="Lucas S."/>
            <person name="Huang K."/>
            <person name="Goodstein D.M."/>
            <person name="Hawkins T."/>
            <person name="Plengvidhya V."/>
            <person name="Welker D."/>
            <person name="Hughes J."/>
            <person name="Goh Y."/>
            <person name="Benson A."/>
            <person name="Baldwin K."/>
            <person name="Lee J.-H."/>
            <person name="Diaz-Muniz I."/>
            <person name="Dosti B."/>
            <person name="Smeianov V."/>
            <person name="Wechter W."/>
            <person name="Barabote R."/>
            <person name="Lorca G."/>
            <person name="Altermann E."/>
            <person name="Barrangou R."/>
            <person name="Ganesan B."/>
            <person name="Xie Y."/>
            <person name="Rawsthorne H."/>
            <person name="Tamir D."/>
            <person name="Parker C."/>
            <person name="Breidt F."/>
            <person name="Broadbent J.R."/>
            <person name="Hutkins R."/>
            <person name="O'Sullivan D."/>
            <person name="Steele J."/>
            <person name="Unlu G."/>
            <person name="Saier M.H. Jr."/>
            <person name="Klaenhammer T."/>
            <person name="Richardson P."/>
            <person name="Kozyavkin S."/>
            <person name="Weimer B.C."/>
            <person name="Mills D.A."/>
        </authorList>
    </citation>
    <scope>NUCLEOTIDE SEQUENCE [LARGE SCALE GENOMIC DNA]</scope>
    <source>
        <strain>ATCC BAA-491 / LMD-9</strain>
    </source>
</reference>
<sequence length="258" mass="30571">MKITKIEKKKRLYLVEIDKKESLYVTEDTIVKYMLTKEKALSKDQLEDIKNFAQFSHGKNLALYFISFKQRTEKEVRDYLFKHEINPHIIPQIIDNLKKDHWIDDYKLLESLAQQNLNSGDKGAYALKQKWLQKGCEKQVIDEVLTQFDFSEVAIKVTSKLLRKYQGKLPTKSLKDKLIQNLINKGFSFQESKNAINQLELEADEENEQALLYKEIEKQYQKFSKKYDGYELKQHLTQSLFRKGYDFDAIASALREYF</sequence>
<feature type="chain" id="PRO_1000065225" description="Regulatory protein RecX">
    <location>
        <begin position="1"/>
        <end position="258"/>
    </location>
</feature>
<accession>Q03M62</accession>
<dbReference type="EMBL" id="CP000419">
    <property type="protein sequence ID" value="ABJ65710.1"/>
    <property type="molecule type" value="Genomic_DNA"/>
</dbReference>
<dbReference type="RefSeq" id="WP_011680776.1">
    <property type="nucleotide sequence ID" value="NC_008532.1"/>
</dbReference>
<dbReference type="SMR" id="Q03M62"/>
<dbReference type="KEGG" id="ste:STER_0422"/>
<dbReference type="HOGENOM" id="CLU_066607_4_0_9"/>
<dbReference type="GO" id="GO:0005737">
    <property type="term" value="C:cytoplasm"/>
    <property type="evidence" value="ECO:0007669"/>
    <property type="project" value="UniProtKB-SubCell"/>
</dbReference>
<dbReference type="GO" id="GO:0006282">
    <property type="term" value="P:regulation of DNA repair"/>
    <property type="evidence" value="ECO:0007669"/>
    <property type="project" value="UniProtKB-UniRule"/>
</dbReference>
<dbReference type="Gene3D" id="1.10.10.10">
    <property type="entry name" value="Winged helix-like DNA-binding domain superfamily/Winged helix DNA-binding domain"/>
    <property type="match status" value="4"/>
</dbReference>
<dbReference type="HAMAP" id="MF_01114">
    <property type="entry name" value="RecX"/>
    <property type="match status" value="1"/>
</dbReference>
<dbReference type="InterPro" id="IPR053926">
    <property type="entry name" value="RecX_HTH_1st"/>
</dbReference>
<dbReference type="InterPro" id="IPR053925">
    <property type="entry name" value="RecX_HTH_3rd"/>
</dbReference>
<dbReference type="InterPro" id="IPR003783">
    <property type="entry name" value="Regulatory_RecX"/>
</dbReference>
<dbReference type="InterPro" id="IPR036388">
    <property type="entry name" value="WH-like_DNA-bd_sf"/>
</dbReference>
<dbReference type="NCBIfam" id="NF010733">
    <property type="entry name" value="PRK14135.1"/>
    <property type="match status" value="1"/>
</dbReference>
<dbReference type="PANTHER" id="PTHR33602">
    <property type="entry name" value="REGULATORY PROTEIN RECX FAMILY PROTEIN"/>
    <property type="match status" value="1"/>
</dbReference>
<dbReference type="PANTHER" id="PTHR33602:SF1">
    <property type="entry name" value="REGULATORY PROTEIN RECX FAMILY PROTEIN"/>
    <property type="match status" value="1"/>
</dbReference>
<dbReference type="Pfam" id="PF21982">
    <property type="entry name" value="RecX_HTH1"/>
    <property type="match status" value="1"/>
</dbReference>
<dbReference type="Pfam" id="PF21981">
    <property type="entry name" value="RecX_HTH3"/>
    <property type="match status" value="1"/>
</dbReference>
<proteinExistence type="inferred from homology"/>
<organism>
    <name type="scientific">Streptococcus thermophilus (strain ATCC BAA-491 / LMD-9)</name>
    <dbReference type="NCBI Taxonomy" id="322159"/>
    <lineage>
        <taxon>Bacteria</taxon>
        <taxon>Bacillati</taxon>
        <taxon>Bacillota</taxon>
        <taxon>Bacilli</taxon>
        <taxon>Lactobacillales</taxon>
        <taxon>Streptococcaceae</taxon>
        <taxon>Streptococcus</taxon>
    </lineage>
</organism>
<gene>
    <name evidence="1" type="primary">recX</name>
    <name type="ordered locus">STER_0422</name>
</gene>
<evidence type="ECO:0000255" key="1">
    <source>
        <dbReference type="HAMAP-Rule" id="MF_01114"/>
    </source>
</evidence>
<protein>
    <recommendedName>
        <fullName evidence="1">Regulatory protein RecX</fullName>
    </recommendedName>
</protein>
<name>RECX_STRTD</name>
<comment type="function">
    <text evidence="1">Modulates RecA activity.</text>
</comment>
<comment type="subcellular location">
    <subcellularLocation>
        <location evidence="1">Cytoplasm</location>
    </subcellularLocation>
</comment>
<comment type="similarity">
    <text evidence="1">Belongs to the RecX family.</text>
</comment>